<dbReference type="EMBL" id="AE000782">
    <property type="protein sequence ID" value="AAB90937.1"/>
    <property type="molecule type" value="Genomic_DNA"/>
</dbReference>
<dbReference type="PIR" id="D69286">
    <property type="entry name" value="D69286"/>
</dbReference>
<dbReference type="RefSeq" id="WP_010877803.1">
    <property type="nucleotide sequence ID" value="NC_000917.1"/>
</dbReference>
<dbReference type="PaxDb" id="224325-AF_0292"/>
<dbReference type="EnsemblBacteria" id="AAB90937">
    <property type="protein sequence ID" value="AAB90937"/>
    <property type="gene ID" value="AF_0292"/>
</dbReference>
<dbReference type="GeneID" id="1483507"/>
<dbReference type="KEGG" id="afu:AF_0292"/>
<dbReference type="HOGENOM" id="CLU_2115350_0_0_2"/>
<dbReference type="Proteomes" id="UP000002199">
    <property type="component" value="Chromosome"/>
</dbReference>
<protein>
    <recommendedName>
        <fullName>Uncharacterized protein AF_0292</fullName>
    </recommendedName>
</protein>
<sequence length="114" mass="13239">MEFFGQLDQMLGSSRENNLWYQKALYFMRRSGIIAKEKVFPKVSANYSPLEGLEFFRIDTLNANLLYERLIVSVLALPRRKKEINLTVKMQKESKRCNGSYPPLISESNAKTTQ</sequence>
<organism>
    <name type="scientific">Archaeoglobus fulgidus (strain ATCC 49558 / DSM 4304 / JCM 9628 / NBRC 100126 / VC-16)</name>
    <dbReference type="NCBI Taxonomy" id="224325"/>
    <lineage>
        <taxon>Archaea</taxon>
        <taxon>Methanobacteriati</taxon>
        <taxon>Methanobacteriota</taxon>
        <taxon>Archaeoglobi</taxon>
        <taxon>Archaeoglobales</taxon>
        <taxon>Archaeoglobaceae</taxon>
        <taxon>Archaeoglobus</taxon>
    </lineage>
</organism>
<reference key="1">
    <citation type="journal article" date="1997" name="Nature">
        <title>The complete genome sequence of the hyperthermophilic, sulphate-reducing archaeon Archaeoglobus fulgidus.</title>
        <authorList>
            <person name="Klenk H.-P."/>
            <person name="Clayton R.A."/>
            <person name="Tomb J.-F."/>
            <person name="White O."/>
            <person name="Nelson K.E."/>
            <person name="Ketchum K.A."/>
            <person name="Dodson R.J."/>
            <person name="Gwinn M.L."/>
            <person name="Hickey E.K."/>
            <person name="Peterson J.D."/>
            <person name="Richardson D.L."/>
            <person name="Kerlavage A.R."/>
            <person name="Graham D.E."/>
            <person name="Kyrpides N.C."/>
            <person name="Fleischmann R.D."/>
            <person name="Quackenbush J."/>
            <person name="Lee N.H."/>
            <person name="Sutton G.G."/>
            <person name="Gill S.R."/>
            <person name="Kirkness E.F."/>
            <person name="Dougherty B.A."/>
            <person name="McKenney K."/>
            <person name="Adams M.D."/>
            <person name="Loftus B.J."/>
            <person name="Peterson S.N."/>
            <person name="Reich C.I."/>
            <person name="McNeil L.K."/>
            <person name="Badger J.H."/>
            <person name="Glodek A."/>
            <person name="Zhou L."/>
            <person name="Overbeek R."/>
            <person name="Gocayne J.D."/>
            <person name="Weidman J.F."/>
            <person name="McDonald L.A."/>
            <person name="Utterback T.R."/>
            <person name="Cotton M.D."/>
            <person name="Spriggs T."/>
            <person name="Artiach P."/>
            <person name="Kaine B.P."/>
            <person name="Sykes S.M."/>
            <person name="Sadow P.W."/>
            <person name="D'Andrea K.P."/>
            <person name="Bowman C."/>
            <person name="Fujii C."/>
            <person name="Garland S.A."/>
            <person name="Mason T.M."/>
            <person name="Olsen G.J."/>
            <person name="Fraser C.M."/>
            <person name="Smith H.O."/>
            <person name="Woese C.R."/>
            <person name="Venter J.C."/>
        </authorList>
    </citation>
    <scope>NUCLEOTIDE SEQUENCE [LARGE SCALE GENOMIC DNA]</scope>
    <source>
        <strain>ATCC 49558 / DSM 4304 / JCM 9628 / NBRC 100126 / VC-16</strain>
    </source>
</reference>
<keyword id="KW-1185">Reference proteome</keyword>
<accession>O29949</accession>
<gene>
    <name type="ordered locus">AF_0292</name>
</gene>
<feature type="chain" id="PRO_0000127860" description="Uncharacterized protein AF_0292">
    <location>
        <begin position="1"/>
        <end position="114"/>
    </location>
</feature>
<name>Y292_ARCFU</name>
<proteinExistence type="predicted"/>